<reference key="1">
    <citation type="journal article" date="1996" name="Virology">
        <title>Analysis of 76 kb of the chlorella virus PBCV-1 330-kb genome: map positions 182 to 258.</title>
        <authorList>
            <person name="Kutish G.F."/>
            <person name="Li Y."/>
            <person name="Lu Z."/>
            <person name="Furuta M."/>
            <person name="Rock D.L."/>
            <person name="van Etten J.L."/>
        </authorList>
    </citation>
    <scope>NUCLEOTIDE SEQUENCE [LARGE SCALE GENOMIC DNA]</scope>
</reference>
<reference key="2">
    <citation type="journal article" date="2001" name="J. Virol.">
        <title>RNA triphosphatase component of the mRNA capping apparatus of Paramecium bursaria Chlorella virus 1.</title>
        <authorList>
            <person name="Ho C.K."/>
            <person name="Gong C."/>
            <person name="Shuman S."/>
        </authorList>
    </citation>
    <scope>FUNCTION</scope>
    <scope>CHARACTERIZATION OF TRIPHOSPHATASE ACTIVITY</scope>
    <scope>MUTAGENESIS OF GLU-26</scope>
</reference>
<comment type="function">
    <text evidence="1">Catalyzes the first stes of cap formation: by removing the gamma-phosphate from the 5'-triphosphate end of nascent mRNA to yield a diphosphate end.</text>
</comment>
<comment type="catalytic activity">
    <reaction evidence="1">
        <text>a 5'-end triphospho-ribonucleoside in mRNA + H2O = a 5'-end diphospho-ribonucleoside in mRNA + phosphate + H(+)</text>
        <dbReference type="Rhea" id="RHEA:67004"/>
        <dbReference type="Rhea" id="RHEA-COMP:17164"/>
        <dbReference type="Rhea" id="RHEA-COMP:17165"/>
        <dbReference type="ChEBI" id="CHEBI:15377"/>
        <dbReference type="ChEBI" id="CHEBI:15378"/>
        <dbReference type="ChEBI" id="CHEBI:43474"/>
        <dbReference type="ChEBI" id="CHEBI:167616"/>
        <dbReference type="ChEBI" id="CHEBI:167618"/>
        <dbReference type="EC" id="3.6.1.74"/>
    </reaction>
    <physiologicalReaction direction="left-to-right" evidence="1">
        <dbReference type="Rhea" id="RHEA:67005"/>
    </physiologicalReaction>
</comment>
<comment type="cofactor">
    <cofactor evidence="1">
        <name>Mn(2+)</name>
        <dbReference type="ChEBI" id="CHEBI:29035"/>
    </cofactor>
</comment>
<name>TPASE_PBCV1</name>
<feature type="chain" id="PRO_0000461951" description="5'RNA triphosphatase A449R">
    <location>
        <begin position="1"/>
        <end position="193"/>
    </location>
</feature>
<feature type="mutagenesis site" description="Complete loss of 5'RNA triphosphatase activity." evidence="1">
    <original>E</original>
    <variation>A</variation>
    <location>
        <position position="26"/>
    </location>
</feature>
<keyword id="KW-0378">Hydrolase</keyword>
<keyword id="KW-0506">mRNA capping</keyword>
<keyword id="KW-0507">mRNA processing</keyword>
<keyword id="KW-1185">Reference proteome</keyword>
<gene>
    <name type="primary">A449R</name>
</gene>
<proteinExistence type="evidence at protein level"/>
<protein>
    <recommendedName>
        <fullName>5'RNA triphosphatase A449R</fullName>
        <ecNumber>3.6.1.74</ecNumber>
    </recommendedName>
</protein>
<evidence type="ECO:0000269" key="1">
    <source>
    </source>
</evidence>
<organismHost>
    <name type="scientific">Chlorella</name>
    <dbReference type="NCBI Taxonomy" id="3071"/>
</organismHost>
<sequence length="193" mass="22451">MATPKSFRDNLAEILKTHDFRTVELEFRLGFQAPGEFITNINKHVWTTAKEKLGTPAQELVMVDKYIRSTPGESSRYVVFPDGQGYWEHKKKVAKETTTGGKYGVRSAFSLERRENGKPPVSFRMQRTKYRTTFVKGPWKIDFTRVESIPATDRDCESTYEIEVELYDMFYLFEKELDIIIQEGNKLVQSIVM</sequence>
<organism>
    <name type="scientific">Paramecium bursaria Chlorella virus 1</name>
    <name type="common">PBCV-1</name>
    <dbReference type="NCBI Taxonomy" id="10506"/>
    <lineage>
        <taxon>Viruses</taxon>
        <taxon>Varidnaviria</taxon>
        <taxon>Bamfordvirae</taxon>
        <taxon>Nucleocytoviricota</taxon>
        <taxon>Megaviricetes</taxon>
        <taxon>Algavirales</taxon>
        <taxon>Phycodnaviridae</taxon>
        <taxon>Chlorovirus</taxon>
    </lineage>
</organism>
<dbReference type="EC" id="3.6.1.74"/>
<dbReference type="EMBL" id="JF411744">
    <property type="protein sequence ID" value="AAC96817.1"/>
    <property type="molecule type" value="Genomic_DNA"/>
</dbReference>
<dbReference type="PIR" id="T17952">
    <property type="entry name" value="T17952"/>
</dbReference>
<dbReference type="RefSeq" id="NP_048806.1">
    <property type="nucleotide sequence ID" value="NC_000852.5"/>
</dbReference>
<dbReference type="GeneID" id="918100"/>
<dbReference type="KEGG" id="vg:918100"/>
<dbReference type="OrthoDB" id="10778at10239"/>
<dbReference type="Proteomes" id="UP000000862">
    <property type="component" value="Genome"/>
</dbReference>
<dbReference type="GO" id="GO:0004651">
    <property type="term" value="F:polynucleotide 5'-phosphatase activity"/>
    <property type="evidence" value="ECO:0007669"/>
    <property type="project" value="InterPro"/>
</dbReference>
<dbReference type="Gene3D" id="3.20.100.10">
    <property type="entry name" value="mRNA triphosphatase Cet1-like"/>
    <property type="match status" value="1"/>
</dbReference>
<dbReference type="InterPro" id="IPR033469">
    <property type="entry name" value="CYTH-like_dom_sf"/>
</dbReference>
<dbReference type="InterPro" id="IPR037009">
    <property type="entry name" value="mRNA_triPase_Cet1_sf"/>
</dbReference>
<dbReference type="SUPFAM" id="SSF55154">
    <property type="entry name" value="CYTH-like phosphatases"/>
    <property type="match status" value="1"/>
</dbReference>
<accession>Q98500</accession>